<keyword id="KW-0004">4Fe-4S</keyword>
<keyword id="KW-0997">Cell inner membrane</keyword>
<keyword id="KW-1003">Cell membrane</keyword>
<keyword id="KW-0408">Iron</keyword>
<keyword id="KW-0411">Iron-sulfur</keyword>
<keyword id="KW-0472">Membrane</keyword>
<keyword id="KW-0479">Metal-binding</keyword>
<keyword id="KW-0520">NAD</keyword>
<keyword id="KW-0874">Quinone</keyword>
<keyword id="KW-1278">Translocase</keyword>
<keyword id="KW-0813">Transport</keyword>
<keyword id="KW-0830">Ubiquinone</keyword>
<name>NUOB_CAMJR</name>
<evidence type="ECO:0000255" key="1">
    <source>
        <dbReference type="HAMAP-Rule" id="MF_01356"/>
    </source>
</evidence>
<accession>Q5HSL3</accession>
<dbReference type="EC" id="7.1.1.-" evidence="1"/>
<dbReference type="EMBL" id="CP000025">
    <property type="protein sequence ID" value="AAW36174.1"/>
    <property type="molecule type" value="Genomic_DNA"/>
</dbReference>
<dbReference type="RefSeq" id="WP_002824974.1">
    <property type="nucleotide sequence ID" value="NC_003912.7"/>
</dbReference>
<dbReference type="SMR" id="Q5HSL3"/>
<dbReference type="KEGG" id="cjr:CJE1749"/>
<dbReference type="HOGENOM" id="CLU_055737_7_3_7"/>
<dbReference type="GO" id="GO:0005886">
    <property type="term" value="C:plasma membrane"/>
    <property type="evidence" value="ECO:0007669"/>
    <property type="project" value="UniProtKB-SubCell"/>
</dbReference>
<dbReference type="GO" id="GO:0045271">
    <property type="term" value="C:respiratory chain complex I"/>
    <property type="evidence" value="ECO:0007669"/>
    <property type="project" value="TreeGrafter"/>
</dbReference>
<dbReference type="GO" id="GO:0051539">
    <property type="term" value="F:4 iron, 4 sulfur cluster binding"/>
    <property type="evidence" value="ECO:0007669"/>
    <property type="project" value="UniProtKB-KW"/>
</dbReference>
<dbReference type="GO" id="GO:0005506">
    <property type="term" value="F:iron ion binding"/>
    <property type="evidence" value="ECO:0007669"/>
    <property type="project" value="UniProtKB-UniRule"/>
</dbReference>
<dbReference type="GO" id="GO:0008137">
    <property type="term" value="F:NADH dehydrogenase (ubiquinone) activity"/>
    <property type="evidence" value="ECO:0007669"/>
    <property type="project" value="InterPro"/>
</dbReference>
<dbReference type="GO" id="GO:0050136">
    <property type="term" value="F:NADH:ubiquinone reductase (non-electrogenic) activity"/>
    <property type="evidence" value="ECO:0007669"/>
    <property type="project" value="UniProtKB-UniRule"/>
</dbReference>
<dbReference type="GO" id="GO:0048038">
    <property type="term" value="F:quinone binding"/>
    <property type="evidence" value="ECO:0007669"/>
    <property type="project" value="UniProtKB-KW"/>
</dbReference>
<dbReference type="GO" id="GO:0009060">
    <property type="term" value="P:aerobic respiration"/>
    <property type="evidence" value="ECO:0007669"/>
    <property type="project" value="TreeGrafter"/>
</dbReference>
<dbReference type="GO" id="GO:0015990">
    <property type="term" value="P:electron transport coupled proton transport"/>
    <property type="evidence" value="ECO:0007669"/>
    <property type="project" value="TreeGrafter"/>
</dbReference>
<dbReference type="FunFam" id="3.40.50.12280:FF:000002">
    <property type="entry name" value="NADH-quinone oxidoreductase subunit B"/>
    <property type="match status" value="1"/>
</dbReference>
<dbReference type="Gene3D" id="3.40.50.12280">
    <property type="match status" value="1"/>
</dbReference>
<dbReference type="HAMAP" id="MF_01356">
    <property type="entry name" value="NDH1_NuoB"/>
    <property type="match status" value="1"/>
</dbReference>
<dbReference type="InterPro" id="IPR006137">
    <property type="entry name" value="NADH_UbQ_OxRdtase-like_20kDa"/>
</dbReference>
<dbReference type="InterPro" id="IPR006138">
    <property type="entry name" value="NADH_UQ_OxRdtase_20Kd_su"/>
</dbReference>
<dbReference type="NCBIfam" id="TIGR01957">
    <property type="entry name" value="nuoB_fam"/>
    <property type="match status" value="1"/>
</dbReference>
<dbReference type="NCBIfam" id="NF005012">
    <property type="entry name" value="PRK06411.1"/>
    <property type="match status" value="1"/>
</dbReference>
<dbReference type="PANTHER" id="PTHR11995">
    <property type="entry name" value="NADH DEHYDROGENASE"/>
    <property type="match status" value="1"/>
</dbReference>
<dbReference type="PANTHER" id="PTHR11995:SF14">
    <property type="entry name" value="NADH DEHYDROGENASE [UBIQUINONE] IRON-SULFUR PROTEIN 7, MITOCHONDRIAL"/>
    <property type="match status" value="1"/>
</dbReference>
<dbReference type="Pfam" id="PF01058">
    <property type="entry name" value="Oxidored_q6"/>
    <property type="match status" value="1"/>
</dbReference>
<dbReference type="SUPFAM" id="SSF56770">
    <property type="entry name" value="HydA/Nqo6-like"/>
    <property type="match status" value="1"/>
</dbReference>
<sequence length="167" mass="18682">MAEHQINYASGLPVVLTSVDKLVQWGRSNSLWALSYGLACCAIEMMAAGGSRYDFDRFGTIFRASPRHSEVMIIAGTLCKKHAEFTRRLYDQMPDPKWVISMGSCANTGGMFNTYSTVQGVDRIIPVDIYVPGCAPRPESFQFALMILQKKIRKEKASRKIAPKRLV</sequence>
<protein>
    <recommendedName>
        <fullName evidence="1">NADH-quinone oxidoreductase subunit B</fullName>
        <ecNumber evidence="1">7.1.1.-</ecNumber>
    </recommendedName>
    <alternativeName>
        <fullName evidence="1">NADH dehydrogenase I subunit B</fullName>
    </alternativeName>
    <alternativeName>
        <fullName evidence="1">NDH-1 subunit B</fullName>
    </alternativeName>
</protein>
<organism>
    <name type="scientific">Campylobacter jejuni (strain RM1221)</name>
    <dbReference type="NCBI Taxonomy" id="195099"/>
    <lineage>
        <taxon>Bacteria</taxon>
        <taxon>Pseudomonadati</taxon>
        <taxon>Campylobacterota</taxon>
        <taxon>Epsilonproteobacteria</taxon>
        <taxon>Campylobacterales</taxon>
        <taxon>Campylobacteraceae</taxon>
        <taxon>Campylobacter</taxon>
    </lineage>
</organism>
<feature type="chain" id="PRO_0000376162" description="NADH-quinone oxidoreductase subunit B">
    <location>
        <begin position="1"/>
        <end position="167"/>
    </location>
</feature>
<feature type="binding site" evidence="1">
    <location>
        <position position="40"/>
    </location>
    <ligand>
        <name>[4Fe-4S] cluster</name>
        <dbReference type="ChEBI" id="CHEBI:49883"/>
    </ligand>
</feature>
<feature type="binding site" evidence="1">
    <location>
        <position position="41"/>
    </location>
    <ligand>
        <name>[4Fe-4S] cluster</name>
        <dbReference type="ChEBI" id="CHEBI:49883"/>
    </ligand>
</feature>
<feature type="binding site" evidence="1">
    <location>
        <position position="105"/>
    </location>
    <ligand>
        <name>[4Fe-4S] cluster</name>
        <dbReference type="ChEBI" id="CHEBI:49883"/>
    </ligand>
</feature>
<feature type="binding site" evidence="1">
    <location>
        <position position="134"/>
    </location>
    <ligand>
        <name>[4Fe-4S] cluster</name>
        <dbReference type="ChEBI" id="CHEBI:49883"/>
    </ligand>
</feature>
<reference key="1">
    <citation type="journal article" date="2005" name="PLoS Biol.">
        <title>Major structural differences and novel potential virulence mechanisms from the genomes of multiple Campylobacter species.</title>
        <authorList>
            <person name="Fouts D.E."/>
            <person name="Mongodin E.F."/>
            <person name="Mandrell R.E."/>
            <person name="Miller W.G."/>
            <person name="Rasko D.A."/>
            <person name="Ravel J."/>
            <person name="Brinkac L.M."/>
            <person name="DeBoy R.T."/>
            <person name="Parker C.T."/>
            <person name="Daugherty S.C."/>
            <person name="Dodson R.J."/>
            <person name="Durkin A.S."/>
            <person name="Madupu R."/>
            <person name="Sullivan S.A."/>
            <person name="Shetty J.U."/>
            <person name="Ayodeji M.A."/>
            <person name="Shvartsbeyn A."/>
            <person name="Schatz M.C."/>
            <person name="Badger J.H."/>
            <person name="Fraser C.M."/>
            <person name="Nelson K.E."/>
        </authorList>
    </citation>
    <scope>NUCLEOTIDE SEQUENCE [LARGE SCALE GENOMIC DNA]</scope>
    <source>
        <strain>RM1221</strain>
    </source>
</reference>
<gene>
    <name evidence="1" type="primary">nuoB</name>
    <name type="ordered locus">CJE1749</name>
</gene>
<comment type="function">
    <text evidence="1">NDH-1 shuttles electrons from NADH, via FMN and iron-sulfur (Fe-S) centers, to quinones in the respiratory chain. The immediate electron acceptor for the enzyme in this species is believed to be ubiquinone. Couples the redox reaction to proton translocation (for every two electrons transferred, four hydrogen ions are translocated across the cytoplasmic membrane), and thus conserves the redox energy in a proton gradient.</text>
</comment>
<comment type="catalytic activity">
    <reaction evidence="1">
        <text>a quinone + NADH + 5 H(+)(in) = a quinol + NAD(+) + 4 H(+)(out)</text>
        <dbReference type="Rhea" id="RHEA:57888"/>
        <dbReference type="ChEBI" id="CHEBI:15378"/>
        <dbReference type="ChEBI" id="CHEBI:24646"/>
        <dbReference type="ChEBI" id="CHEBI:57540"/>
        <dbReference type="ChEBI" id="CHEBI:57945"/>
        <dbReference type="ChEBI" id="CHEBI:132124"/>
    </reaction>
</comment>
<comment type="cofactor">
    <cofactor evidence="1">
        <name>[4Fe-4S] cluster</name>
        <dbReference type="ChEBI" id="CHEBI:49883"/>
    </cofactor>
    <text evidence="1">Binds 1 [4Fe-4S] cluster.</text>
</comment>
<comment type="subunit">
    <text evidence="1">NDH-1 is composed of 14 different subunits. Subunits NuoB, C, D, E, F, and G constitute the peripheral sector of the complex.</text>
</comment>
<comment type="subcellular location">
    <subcellularLocation>
        <location evidence="1">Cell inner membrane</location>
        <topology evidence="1">Peripheral membrane protein</topology>
        <orientation evidence="1">Cytoplasmic side</orientation>
    </subcellularLocation>
</comment>
<comment type="similarity">
    <text evidence="1">Belongs to the complex I 20 kDa subunit family.</text>
</comment>
<proteinExistence type="inferred from homology"/>